<reference key="1">
    <citation type="journal article" date="2002" name="J. Biol. Chem.">
        <title>Identification of a jasmonate-regulated allene oxide synthase that metabolizes 9-hydroperoxides of linoleic and linolenic acids.</title>
        <authorList>
            <person name="Itoh A."/>
            <person name="Schilmiller A.L."/>
            <person name="McCaig B.C."/>
            <person name="Howe G.A."/>
        </authorList>
    </citation>
    <scope>NUCLEOTIDE SEQUENCE [MRNA]</scope>
    <scope>FUNCTION</scope>
    <scope>CATALYTIC ACTIVITY</scope>
    <scope>BIOPHYSICOCHEMICAL PROPERTIES</scope>
    <scope>TISSUE SPECIFICITY</scope>
    <scope>DEVELOPMENTAL STAGE</scope>
    <scope>INDUCTION</scope>
    <scope>GENE FAMILY</scope>
    <scope>NOMENCLATURE</scope>
    <source>
        <strain>cv. Castlemart</strain>
    </source>
</reference>
<reference key="2">
    <citation type="journal article" date="2012" name="Nature">
        <title>The tomato genome sequence provides insights into fleshy fruit evolution.</title>
        <authorList>
            <consortium name="Tomato Genome Consortium"/>
        </authorList>
    </citation>
    <scope>NUCLEOTIDE SEQUENCE [LARGE SCALE GENOMIC DNA]</scope>
    <source>
        <strain>cv. Heinz 1706</strain>
    </source>
</reference>
<reference key="3">
    <citation type="journal article" date="2006" name="Biochem. Soc. Trans.">
        <title>CYP74C3 and CYP74A1, plant cytochrome P450 enzymes whose activity is regulated by detergent micelle association, and proposed new rules for the classification of CYP74 enzymes.</title>
        <authorList>
            <person name="Hughes R.K."/>
            <person name="Belfield E.J."/>
            <person name="Casey R."/>
        </authorList>
    </citation>
    <scope>NOMENCLATURE</scope>
</reference>
<reference key="4">
    <citation type="journal article" date="2008" name="ChemBioChem">
        <title>Tomato CYP74C3 is a multifunctional enzyme not only synthesizing allene oxide but also catalyzing its hydrolysis and cyclization.</title>
        <authorList>
            <person name="Grechkin A.N."/>
            <person name="Mukhtarova L.S."/>
            <person name="Latypova L.R."/>
            <person name="Gogolev Y."/>
            <person name="Toporkova Y.Y."/>
            <person name="Hamberg M."/>
        </authorList>
    </citation>
    <scope>FUNCTION</scope>
    <scope>CATALYTIC ACTIVITY</scope>
    <scope>SUBSTRATE SPECIFICITY</scope>
</reference>
<reference key="5">
    <citation type="journal article" date="2008" name="FEBS Lett.">
        <title>Determinants governing the CYP74 catalysis: conversion of allene oxide synthase into hydroperoxide lyase by site-directed mutagenesis.</title>
        <authorList>
            <person name="Toporkova Y.Y."/>
            <person name="Gogolev Y.V."/>
            <person name="Mukhtarova L.S."/>
            <person name="Grechkin A.N."/>
        </authorList>
    </citation>
    <scope>FUNCTION</scope>
    <scope>MUTAGENESIS OF PHE-295 AND SER-297</scope>
</reference>
<gene>
    <name evidence="6" type="primary">AOS3</name>
    <name evidence="6" type="synonym">CYP74C3</name>
    <name evidence="7" type="synonym">CYP74D1</name>
    <name type="ordered locus">Solyc10g007960</name>
</gene>
<protein>
    <recommendedName>
        <fullName evidence="6">Allene oxide synthase 3</fullName>
        <shortName evidence="6">LeAOS3</shortName>
        <ecNumber evidence="3">4.2.1.92</ecNumber>
    </recommendedName>
    <alternativeName>
        <fullName evidence="6">Allene oxide cyclase</fullName>
        <ecNumber evidence="3">5.3.99.6</ecNumber>
    </alternativeName>
    <alternativeName>
        <fullName evidence="6">Cytochrome P450 CYP74C3</fullName>
    </alternativeName>
    <alternativeName>
        <fullName evidence="7">Cytochrome P450 CYP74D1</fullName>
    </alternativeName>
</protein>
<organism>
    <name type="scientific">Solanum lycopersicum</name>
    <name type="common">Tomato</name>
    <name type="synonym">Lycopersicon esculentum</name>
    <dbReference type="NCBI Taxonomy" id="4081"/>
    <lineage>
        <taxon>Eukaryota</taxon>
        <taxon>Viridiplantae</taxon>
        <taxon>Streptophyta</taxon>
        <taxon>Embryophyta</taxon>
        <taxon>Tracheophyta</taxon>
        <taxon>Spermatophyta</taxon>
        <taxon>Magnoliopsida</taxon>
        <taxon>eudicotyledons</taxon>
        <taxon>Gunneridae</taxon>
        <taxon>Pentapetalae</taxon>
        <taxon>asterids</taxon>
        <taxon>lamiids</taxon>
        <taxon>Solanales</taxon>
        <taxon>Solanaceae</taxon>
        <taxon>Solanoideae</taxon>
        <taxon>Solaneae</taxon>
        <taxon>Solanum</taxon>
        <taxon>Solanum subgen. Lycopersicon</taxon>
    </lineage>
</organism>
<evidence type="ECO:0000250" key="1">
    <source>
        <dbReference type="UniProtKB" id="Q40778"/>
    </source>
</evidence>
<evidence type="ECO:0000250" key="2">
    <source>
        <dbReference type="UniProtKB" id="Q96242"/>
    </source>
</evidence>
<evidence type="ECO:0000269" key="3">
    <source>
    </source>
</evidence>
<evidence type="ECO:0000269" key="4">
    <source>
    </source>
</evidence>
<evidence type="ECO:0000269" key="5">
    <source>
    </source>
</evidence>
<evidence type="ECO:0000303" key="6">
    <source>
    </source>
</evidence>
<evidence type="ECO:0000303" key="7">
    <source>
    </source>
</evidence>
<evidence type="ECO:0000305" key="8"/>
<evidence type="ECO:0000305" key="9">
    <source>
    </source>
</evidence>
<evidence type="ECO:0000305" key="10">
    <source>
    </source>
</evidence>
<name>AOS3_SOLLC</name>
<comment type="function">
    <text evidence="3 4">Cytochrome P450 metabolizing both 13- and 9-hydroperoxides of linoleic and linolenic acids, but with a marked preference for 9-hydroperoxy fatty acids (PubMed:12351632, PubMed:18780387). Catalyzes not only the synthesis of allene oxide, but also its hydrolysis and cyclization (PubMed:18780387). The first step is the synthesis of (12Z)-9,10-epoxyoctadeca-10,12-dienoic acid (9,10-EOD) and the final products are (9R)-alpha-ketol and the racemic cis-10-oxo-11-phytoenoic acid (PubMed:18780387). The cyclase activity possesses regiospecificity and (9Z)-12,13-epoxyoctadeca-9,11-dienoic acid (12,13-EOD) is significantly less efficient as a substrate for cyclopentenone production than 9,10-EOD (PubMed:18780387). Has no hydroperoxide lyase activity (PubMed:12351632). May play a defensive role against soil-borne pests that affect roots or juvenile tissues as they emerge from the germinating seed (PubMed:12351632).</text>
</comment>
<comment type="catalytic activity">
    <reaction evidence="3">
        <text>(13S)-hydroperoxy-(9Z,11E,15Z)-octadecatrienoate = (9Z,13S,15Z)-12,13-epoxyoctadeca-9,11,15-trienoate + H2O</text>
        <dbReference type="Rhea" id="RHEA:25074"/>
        <dbReference type="ChEBI" id="CHEBI:15377"/>
        <dbReference type="ChEBI" id="CHEBI:36438"/>
        <dbReference type="ChEBI" id="CHEBI:58757"/>
        <dbReference type="EC" id="4.2.1.92"/>
    </reaction>
    <physiologicalReaction direction="left-to-right" evidence="9">
        <dbReference type="Rhea" id="RHEA:25075"/>
    </physiologicalReaction>
</comment>
<comment type="catalytic activity">
    <reaction evidence="3 4">
        <text>(13S)-hydroperoxy-(9Z,11E)-octadecadienoate = (9Z,13S)-12,13-epoxyoctadeca-9,11-dienoate + H2O</text>
        <dbReference type="Rhea" id="RHEA:84075"/>
        <dbReference type="ChEBI" id="CHEBI:15377"/>
        <dbReference type="ChEBI" id="CHEBI:57465"/>
        <dbReference type="ChEBI" id="CHEBI:57466"/>
    </reaction>
    <physiologicalReaction direction="left-to-right" evidence="9 10">
        <dbReference type="Rhea" id="RHEA:84076"/>
    </physiologicalReaction>
</comment>
<comment type="catalytic activity">
    <reaction evidence="3">
        <text>(9Z,13S,15Z)-12,13-epoxyoctadeca-9,11,15-trienoate = (9S,13S,15Z)-12-oxophyto-10,15-dienoate</text>
        <dbReference type="Rhea" id="RHEA:22592"/>
        <dbReference type="ChEBI" id="CHEBI:36438"/>
        <dbReference type="ChEBI" id="CHEBI:57411"/>
        <dbReference type="EC" id="5.3.99.6"/>
    </reaction>
</comment>
<comment type="cofactor">
    <cofactor evidence="2">
        <name>heme b</name>
        <dbReference type="ChEBI" id="CHEBI:60344"/>
    </cofactor>
</comment>
<comment type="biophysicochemical properties">
    <kinetics>
        <KM evidence="3">21 uM for (10E,12Z)-9-hydroperoxyoctadeca-10,12-dienoate (9-HPOD)</KM>
        <KM evidence="3">16 uM for (10E,12Z,15Z)-9-hydroperoxyoctadeca-10,12,15-trienoate (9-HPOT)</KM>
        <KM evidence="3">11 uM for (9Z,11E)-(13S)-hydroperoxyoctadeca-9,11-dienoate (13-HPOD)</KM>
        <KM evidence="3">4 uM for (9Z,11E,15Z)-(13S)-hydroperoxyoctadeca-9,11,15-trienoate (13-HPOT)</KM>
        <text evidence="3">kcat is 820 sec(-1) with 9-HPOD as substrate. kcat is 236 sec(-1) with 9-HPOT as substrate. kcat is 99 sec(-1) with 13-HPOD as substrate. kcat is 21 sec(-1) with 13-HPOT as substrate.</text>
    </kinetics>
</comment>
<comment type="tissue specificity">
    <text evidence="3">Expressed in roots. Not detected in aerial tissues, including cotyledons, leaves, stems and flower buds.</text>
</comment>
<comment type="developmental stage">
    <text evidence="3">Expressed early after seed germination, when the radical has just emerged from the seed coat.</text>
</comment>
<comment type="induction">
    <text evidence="3">Not induced in wounded or jasmonate-treated leaves.</text>
</comment>
<comment type="similarity">
    <text evidence="8">Belongs to the cytochrome P450 family.</text>
</comment>
<keyword id="KW-0275">Fatty acid biosynthesis</keyword>
<keyword id="KW-0276">Fatty acid metabolism</keyword>
<keyword id="KW-0349">Heme</keyword>
<keyword id="KW-0408">Iron</keyword>
<keyword id="KW-0413">Isomerase</keyword>
<keyword id="KW-0444">Lipid biosynthesis</keyword>
<keyword id="KW-0443">Lipid metabolism</keyword>
<keyword id="KW-0456">Lyase</keyword>
<keyword id="KW-0479">Metal-binding</keyword>
<keyword id="KW-0925">Oxylipin biosynthesis</keyword>
<keyword id="KW-0611">Plant defense</keyword>
<keyword id="KW-1185">Reference proteome</keyword>
<feature type="chain" id="PRO_0000436192" description="Allene oxide synthase 3">
    <location>
        <begin position="1"/>
        <end position="491"/>
    </location>
</feature>
<feature type="binding site" evidence="2">
    <location>
        <position position="104"/>
    </location>
    <ligand>
        <name>heme b</name>
        <dbReference type="ChEBI" id="CHEBI:60344"/>
    </ligand>
</feature>
<feature type="binding site" evidence="2">
    <location>
        <position position="135"/>
    </location>
    <ligand>
        <name>heme b</name>
        <dbReference type="ChEBI" id="CHEBI:60344"/>
    </ligand>
</feature>
<feature type="binding site" evidence="2">
    <location>
        <position position="139"/>
    </location>
    <ligand>
        <name>heme b</name>
        <dbReference type="ChEBI" id="CHEBI:60344"/>
    </ligand>
</feature>
<feature type="binding site" evidence="2">
    <location>
        <position position="296"/>
    </location>
    <ligand>
        <name>(13S)-hydroperoxy-(9Z,11E)-octadecadienoate</name>
        <dbReference type="ChEBI" id="CHEBI:57466"/>
    </ligand>
</feature>
<feature type="binding site" evidence="2">
    <location>
        <position position="296"/>
    </location>
    <ligand>
        <name>(13S)-hydroperoxy-(9Z,11E,15Z)-octadecatrienoate</name>
        <dbReference type="ChEBI" id="CHEBI:58757"/>
    </ligand>
</feature>
<feature type="binding site" evidence="1">
    <location>
        <position position="302"/>
    </location>
    <ligand>
        <name>(13S)-hydroperoxy-(9Z,11E)-octadecadienoate</name>
        <dbReference type="ChEBI" id="CHEBI:57466"/>
    </ligand>
</feature>
<feature type="binding site" evidence="2">
    <location>
        <position position="442"/>
    </location>
    <ligand>
        <name>heme b</name>
        <dbReference type="ChEBI" id="CHEBI:60344"/>
    </ligand>
</feature>
<feature type="binding site" description="axial binding residue" evidence="2">
    <location>
        <position position="444"/>
    </location>
    <ligand>
        <name>heme b</name>
        <dbReference type="ChEBI" id="CHEBI:60344"/>
    </ligand>
    <ligandPart>
        <name>Fe</name>
        <dbReference type="ChEBI" id="CHEBI:18248"/>
    </ligandPart>
</feature>
<feature type="mutagenesis site" description="Loss of AOS activity, but gain of a hydroperoxide lyase activity." evidence="5">
    <original>F</original>
    <variation>I</variation>
    <location>
        <position position="295"/>
    </location>
</feature>
<feature type="mutagenesis site" description="Strongly decreased AOS activity, but gain of a hydroperoxide lyase activity." evidence="5">
    <original>S</original>
    <variation>A</variation>
    <location>
        <position position="297"/>
    </location>
</feature>
<dbReference type="EC" id="4.2.1.92" evidence="3"/>
<dbReference type="EC" id="5.3.99.6" evidence="3"/>
<dbReference type="EMBL" id="AF454634">
    <property type="protein sequence ID" value="AAN76867.1"/>
    <property type="molecule type" value="mRNA"/>
</dbReference>
<dbReference type="RefSeq" id="NP_001265949.1">
    <property type="nucleotide sequence ID" value="NM_001279020.2"/>
</dbReference>
<dbReference type="SMR" id="Q8GZP5"/>
<dbReference type="STRING" id="4081.Q8GZP5"/>
<dbReference type="PaxDb" id="4081-Solyc10g007960.1.1"/>
<dbReference type="EnsemblPlants" id="Solyc10g007960.1.1">
    <property type="protein sequence ID" value="Solyc10g007960.1.1.1"/>
    <property type="gene ID" value="Solyc10g007960.1"/>
</dbReference>
<dbReference type="GeneID" id="101247264"/>
<dbReference type="Gramene" id="Solyc10g007960.1.1">
    <property type="protein sequence ID" value="Solyc10g007960.1.1.1"/>
    <property type="gene ID" value="Solyc10g007960.1"/>
</dbReference>
<dbReference type="KEGG" id="sly:101247264"/>
<dbReference type="eggNOG" id="ENOG502QV50">
    <property type="taxonomic scope" value="Eukaryota"/>
</dbReference>
<dbReference type="HOGENOM" id="CLU_045757_0_0_1"/>
<dbReference type="InParanoid" id="Q8GZP5"/>
<dbReference type="OMA" id="QSHEASF"/>
<dbReference type="OrthoDB" id="2789670at2759"/>
<dbReference type="PhylomeDB" id="Q8GZP5"/>
<dbReference type="Proteomes" id="UP000004994">
    <property type="component" value="Chromosome 10"/>
</dbReference>
<dbReference type="GO" id="GO:0009978">
    <property type="term" value="F:allene oxide synthase activity"/>
    <property type="evidence" value="ECO:0007669"/>
    <property type="project" value="UniProtKB-EC"/>
</dbReference>
<dbReference type="GO" id="GO:0046423">
    <property type="term" value="F:allene-oxide cyclase activity"/>
    <property type="evidence" value="ECO:0007669"/>
    <property type="project" value="UniProtKB-EC"/>
</dbReference>
<dbReference type="GO" id="GO:0020037">
    <property type="term" value="F:heme binding"/>
    <property type="evidence" value="ECO:0007669"/>
    <property type="project" value="InterPro"/>
</dbReference>
<dbReference type="GO" id="GO:0005506">
    <property type="term" value="F:iron ion binding"/>
    <property type="evidence" value="ECO:0007669"/>
    <property type="project" value="InterPro"/>
</dbReference>
<dbReference type="GO" id="GO:0004497">
    <property type="term" value="F:monooxygenase activity"/>
    <property type="evidence" value="ECO:0000318"/>
    <property type="project" value="GO_Central"/>
</dbReference>
<dbReference type="GO" id="GO:0016705">
    <property type="term" value="F:oxidoreductase activity, acting on paired donors, with incorporation or reduction of molecular oxygen"/>
    <property type="evidence" value="ECO:0007669"/>
    <property type="project" value="InterPro"/>
</dbReference>
<dbReference type="GO" id="GO:0006952">
    <property type="term" value="P:defense response"/>
    <property type="evidence" value="ECO:0007669"/>
    <property type="project" value="UniProtKB-KW"/>
</dbReference>
<dbReference type="GO" id="GO:0006633">
    <property type="term" value="P:fatty acid biosynthetic process"/>
    <property type="evidence" value="ECO:0007669"/>
    <property type="project" value="UniProtKB-KW"/>
</dbReference>
<dbReference type="GO" id="GO:0031408">
    <property type="term" value="P:oxylipin biosynthetic process"/>
    <property type="evidence" value="ECO:0007669"/>
    <property type="project" value="UniProtKB-KW"/>
</dbReference>
<dbReference type="CDD" id="cd11071">
    <property type="entry name" value="CYP74"/>
    <property type="match status" value="1"/>
</dbReference>
<dbReference type="FunFam" id="1.10.630.10:FF:000024">
    <property type="entry name" value="Allene oxide synthase, chloroplastic"/>
    <property type="match status" value="1"/>
</dbReference>
<dbReference type="Gene3D" id="1.10.630.10">
    <property type="entry name" value="Cytochrome P450"/>
    <property type="match status" value="1"/>
</dbReference>
<dbReference type="InterPro" id="IPR001128">
    <property type="entry name" value="Cyt_P450"/>
</dbReference>
<dbReference type="InterPro" id="IPR036396">
    <property type="entry name" value="Cyt_P450_sf"/>
</dbReference>
<dbReference type="PANTHER" id="PTHR24286:SF223">
    <property type="entry name" value="ALLENE OXIDE SYNTHASE 3"/>
    <property type="match status" value="1"/>
</dbReference>
<dbReference type="PANTHER" id="PTHR24286">
    <property type="entry name" value="CYTOCHROME P450 26"/>
    <property type="match status" value="1"/>
</dbReference>
<dbReference type="Pfam" id="PF00067">
    <property type="entry name" value="p450"/>
    <property type="match status" value="1"/>
</dbReference>
<dbReference type="SUPFAM" id="SSF48264">
    <property type="entry name" value="Cytochrome P450"/>
    <property type="match status" value="1"/>
</dbReference>
<proteinExistence type="evidence at protein level"/>
<sequence length="491" mass="55514">MANTKDSYHIITMDTKESSIPSLPMKEIPGDYGVPFFGAIKDRYDFHYNQGADEFFRSRMKKYDSTVFRTNVPPGPFNARNSKVVVLVDAVSYPILFDNSQVDKENYFEGTFMSSPSFNGGYKVCGFLGTSDPKHTTLKGLFLSTLTRLHDKFIPIFTTSITSMFTSLEKELSEKGTSYFNPIGDNLSFEFLFRLFCEGKNPIDTSVGPNGPKIVDKWVFLQLAPLISLGLKFVPNFLEDLVLHTFPLPYILVKRDHQKLYNAFYNSMKDILDEAEKLGVKRDEACHNFVFLAGFNSYGGLKVFFPSLIKWIGTSGPSLHARLVKEIRTAVKEAGGVTLSAIDKMPLVKSVVYETLRMDPPVPFQTVKARKNIIITNHESSFLIKKDELIFGYQPLATKDSKVFKNAEEFNPDRFVGGGEKLLKYVYWSNGKEIDNPSVNDKQCPGKDLIVLMGRLLVVEFFMRYDTFEVEFGKLLLGSKVTFKSLTKATS</sequence>
<accession>Q8GZP5</accession>